<keyword id="KW-0963">Cytoplasm</keyword>
<keyword id="KW-0342">GTP-binding</keyword>
<keyword id="KW-0378">Hydrolase</keyword>
<keyword id="KW-0460">Magnesium</keyword>
<keyword id="KW-0479">Metal-binding</keyword>
<keyword id="KW-0547">Nucleotide-binding</keyword>
<keyword id="KW-0630">Potassium</keyword>
<keyword id="KW-0819">tRNA processing</keyword>
<sequence length="460" mass="51339">MVFDTIAAISTFPGEAGIGIVRLSGDDALEIISKIFKPYKSKDIKKVKSHTLHYGHIVDPETEEVYDEVLVSIMEKPNTYTREDIVEINCHGGIVVTSKILELVLKQGARLAEPGEFTKRAFLNGRIDLSQAEAVIDIIRAKTMLANRYAQKQLVGYVGSKIKEMKDKIMGLLVHLLALIDFPEEDVEELERKEILETAKEIVEDIDKLIASSESGRIIREGLKTAIIGKPNVGKSSLLNALLKENRAIVTDIPGTTRDIIEEYVNVKGIPIKLIDTAGIRDTDELVEKIGVTKSKEVLAEADLILFVLDASRELTKEDYEIFDILTGKNIIFVLNKIDLPKKIDEKELKDLTKDGIIIEVSTVEKIGLEELENTIYNLVFRGDISLREDEIVINSRHKEALINAKKYMESCVEAIEGGYSEDLITIDLNAALDQLGKITGETATEDLINEIFERFCVGK</sequence>
<protein>
    <recommendedName>
        <fullName evidence="1">tRNA modification GTPase MnmE</fullName>
        <ecNumber evidence="1">3.6.-.-</ecNumber>
    </recommendedName>
</protein>
<organism>
    <name type="scientific">Thermoanaerobacter sp. (strain X514)</name>
    <dbReference type="NCBI Taxonomy" id="399726"/>
    <lineage>
        <taxon>Bacteria</taxon>
        <taxon>Bacillati</taxon>
        <taxon>Bacillota</taxon>
        <taxon>Clostridia</taxon>
        <taxon>Thermoanaerobacterales</taxon>
        <taxon>Thermoanaerobacteraceae</taxon>
        <taxon>Thermoanaerobacter</taxon>
    </lineage>
</organism>
<reference key="1">
    <citation type="submission" date="2008-01" db="EMBL/GenBank/DDBJ databases">
        <title>Complete sequence of Thermoanaerobacter sp. X514.</title>
        <authorList>
            <consortium name="US DOE Joint Genome Institute"/>
            <person name="Copeland A."/>
            <person name="Lucas S."/>
            <person name="Lapidus A."/>
            <person name="Barry K."/>
            <person name="Glavina del Rio T."/>
            <person name="Dalin E."/>
            <person name="Tice H."/>
            <person name="Pitluck S."/>
            <person name="Bruce D."/>
            <person name="Goodwin L."/>
            <person name="Saunders E."/>
            <person name="Brettin T."/>
            <person name="Detter J.C."/>
            <person name="Han C."/>
            <person name="Schmutz J."/>
            <person name="Larimer F."/>
            <person name="Land M."/>
            <person name="Hauser L."/>
            <person name="Kyrpides N."/>
            <person name="Kim E."/>
            <person name="Hemme C."/>
            <person name="Fields M.W."/>
            <person name="He Z."/>
            <person name="Zhou J."/>
            <person name="Richardson P."/>
        </authorList>
    </citation>
    <scope>NUCLEOTIDE SEQUENCE [LARGE SCALE GENOMIC DNA]</scope>
    <source>
        <strain>X514</strain>
    </source>
</reference>
<comment type="function">
    <text evidence="1">Exhibits a very high intrinsic GTPase hydrolysis rate. Involved in the addition of a carboxymethylaminomethyl (cmnm) group at the wobble position (U34) of certain tRNAs, forming tRNA-cmnm(5)s(2)U34.</text>
</comment>
<comment type="cofactor">
    <cofactor evidence="1">
        <name>K(+)</name>
        <dbReference type="ChEBI" id="CHEBI:29103"/>
    </cofactor>
    <text evidence="1">Binds 1 potassium ion per subunit.</text>
</comment>
<comment type="subunit">
    <text evidence="1">Homodimer. Heterotetramer of two MnmE and two MnmG subunits.</text>
</comment>
<comment type="subcellular location">
    <subcellularLocation>
        <location evidence="1">Cytoplasm</location>
    </subcellularLocation>
</comment>
<comment type="similarity">
    <text evidence="1">Belongs to the TRAFAC class TrmE-Era-EngA-EngB-Septin-like GTPase superfamily. TrmE GTPase family.</text>
</comment>
<evidence type="ECO:0000255" key="1">
    <source>
        <dbReference type="HAMAP-Rule" id="MF_00379"/>
    </source>
</evidence>
<feature type="chain" id="PRO_0000345924" description="tRNA modification GTPase MnmE">
    <location>
        <begin position="1"/>
        <end position="460"/>
    </location>
</feature>
<feature type="domain" description="TrmE-type G">
    <location>
        <begin position="222"/>
        <end position="381"/>
    </location>
</feature>
<feature type="binding site" evidence="1">
    <location>
        <position position="22"/>
    </location>
    <ligand>
        <name>(6S)-5-formyl-5,6,7,8-tetrahydrofolate</name>
        <dbReference type="ChEBI" id="CHEBI:57457"/>
    </ligand>
</feature>
<feature type="binding site" evidence="1">
    <location>
        <position position="87"/>
    </location>
    <ligand>
        <name>(6S)-5-formyl-5,6,7,8-tetrahydrofolate</name>
        <dbReference type="ChEBI" id="CHEBI:57457"/>
    </ligand>
</feature>
<feature type="binding site" evidence="1">
    <location>
        <position position="126"/>
    </location>
    <ligand>
        <name>(6S)-5-formyl-5,6,7,8-tetrahydrofolate</name>
        <dbReference type="ChEBI" id="CHEBI:57457"/>
    </ligand>
</feature>
<feature type="binding site" evidence="1">
    <location>
        <begin position="232"/>
        <end position="237"/>
    </location>
    <ligand>
        <name>GTP</name>
        <dbReference type="ChEBI" id="CHEBI:37565"/>
    </ligand>
</feature>
<feature type="binding site" evidence="1">
    <location>
        <position position="232"/>
    </location>
    <ligand>
        <name>K(+)</name>
        <dbReference type="ChEBI" id="CHEBI:29103"/>
    </ligand>
</feature>
<feature type="binding site" evidence="1">
    <location>
        <position position="236"/>
    </location>
    <ligand>
        <name>Mg(2+)</name>
        <dbReference type="ChEBI" id="CHEBI:18420"/>
    </ligand>
</feature>
<feature type="binding site" evidence="1">
    <location>
        <begin position="251"/>
        <end position="257"/>
    </location>
    <ligand>
        <name>GTP</name>
        <dbReference type="ChEBI" id="CHEBI:37565"/>
    </ligand>
</feature>
<feature type="binding site" evidence="1">
    <location>
        <position position="251"/>
    </location>
    <ligand>
        <name>K(+)</name>
        <dbReference type="ChEBI" id="CHEBI:29103"/>
    </ligand>
</feature>
<feature type="binding site" evidence="1">
    <location>
        <position position="253"/>
    </location>
    <ligand>
        <name>K(+)</name>
        <dbReference type="ChEBI" id="CHEBI:29103"/>
    </ligand>
</feature>
<feature type="binding site" evidence="1">
    <location>
        <position position="256"/>
    </location>
    <ligand>
        <name>K(+)</name>
        <dbReference type="ChEBI" id="CHEBI:29103"/>
    </ligand>
</feature>
<feature type="binding site" evidence="1">
    <location>
        <position position="257"/>
    </location>
    <ligand>
        <name>Mg(2+)</name>
        <dbReference type="ChEBI" id="CHEBI:18420"/>
    </ligand>
</feature>
<feature type="binding site" evidence="1">
    <location>
        <begin position="276"/>
        <end position="279"/>
    </location>
    <ligand>
        <name>GTP</name>
        <dbReference type="ChEBI" id="CHEBI:37565"/>
    </ligand>
</feature>
<feature type="binding site" evidence="1">
    <location>
        <position position="460"/>
    </location>
    <ligand>
        <name>(6S)-5-formyl-5,6,7,8-tetrahydrofolate</name>
        <dbReference type="ChEBI" id="CHEBI:57457"/>
    </ligand>
</feature>
<name>MNME_THEPX</name>
<accession>B0K5N4</accession>
<dbReference type="EC" id="3.6.-.-" evidence="1"/>
<dbReference type="EMBL" id="CP000923">
    <property type="protein sequence ID" value="ABY93668.1"/>
    <property type="molecule type" value="Genomic_DNA"/>
</dbReference>
<dbReference type="RefSeq" id="WP_012268801.1">
    <property type="nucleotide sequence ID" value="NC_010320.1"/>
</dbReference>
<dbReference type="SMR" id="B0K5N4"/>
<dbReference type="KEGG" id="tex:Teth514_2409"/>
<dbReference type="HOGENOM" id="CLU_019624_4_1_9"/>
<dbReference type="Proteomes" id="UP000002155">
    <property type="component" value="Chromosome"/>
</dbReference>
<dbReference type="GO" id="GO:0005829">
    <property type="term" value="C:cytosol"/>
    <property type="evidence" value="ECO:0007669"/>
    <property type="project" value="TreeGrafter"/>
</dbReference>
<dbReference type="GO" id="GO:0005525">
    <property type="term" value="F:GTP binding"/>
    <property type="evidence" value="ECO:0007669"/>
    <property type="project" value="UniProtKB-UniRule"/>
</dbReference>
<dbReference type="GO" id="GO:0003924">
    <property type="term" value="F:GTPase activity"/>
    <property type="evidence" value="ECO:0007669"/>
    <property type="project" value="UniProtKB-UniRule"/>
</dbReference>
<dbReference type="GO" id="GO:0046872">
    <property type="term" value="F:metal ion binding"/>
    <property type="evidence" value="ECO:0007669"/>
    <property type="project" value="UniProtKB-KW"/>
</dbReference>
<dbReference type="GO" id="GO:0030488">
    <property type="term" value="P:tRNA methylation"/>
    <property type="evidence" value="ECO:0007669"/>
    <property type="project" value="TreeGrafter"/>
</dbReference>
<dbReference type="GO" id="GO:0002098">
    <property type="term" value="P:tRNA wobble uridine modification"/>
    <property type="evidence" value="ECO:0007669"/>
    <property type="project" value="TreeGrafter"/>
</dbReference>
<dbReference type="CDD" id="cd04164">
    <property type="entry name" value="trmE"/>
    <property type="match status" value="1"/>
</dbReference>
<dbReference type="CDD" id="cd14858">
    <property type="entry name" value="TrmE_N"/>
    <property type="match status" value="1"/>
</dbReference>
<dbReference type="FunFam" id="3.30.1360.120:FF:000003">
    <property type="entry name" value="tRNA modification GTPase MnmE"/>
    <property type="match status" value="1"/>
</dbReference>
<dbReference type="FunFam" id="3.40.50.300:FF:000494">
    <property type="entry name" value="tRNA modification GTPase MnmE"/>
    <property type="match status" value="1"/>
</dbReference>
<dbReference type="Gene3D" id="3.40.50.300">
    <property type="entry name" value="P-loop containing nucleotide triphosphate hydrolases"/>
    <property type="match status" value="1"/>
</dbReference>
<dbReference type="Gene3D" id="3.30.1360.120">
    <property type="entry name" value="Probable tRNA modification gtpase trme, domain 1"/>
    <property type="match status" value="1"/>
</dbReference>
<dbReference type="Gene3D" id="1.20.120.430">
    <property type="entry name" value="tRNA modification GTPase MnmE domain 2"/>
    <property type="match status" value="1"/>
</dbReference>
<dbReference type="HAMAP" id="MF_00379">
    <property type="entry name" value="GTPase_MnmE"/>
    <property type="match status" value="1"/>
</dbReference>
<dbReference type="InterPro" id="IPR031168">
    <property type="entry name" value="G_TrmE"/>
</dbReference>
<dbReference type="InterPro" id="IPR006073">
    <property type="entry name" value="GTP-bd"/>
</dbReference>
<dbReference type="InterPro" id="IPR018948">
    <property type="entry name" value="GTP-bd_TrmE_N"/>
</dbReference>
<dbReference type="InterPro" id="IPR004520">
    <property type="entry name" value="GTPase_MnmE"/>
</dbReference>
<dbReference type="InterPro" id="IPR027368">
    <property type="entry name" value="MnmE_dom2"/>
</dbReference>
<dbReference type="InterPro" id="IPR025867">
    <property type="entry name" value="MnmE_helical"/>
</dbReference>
<dbReference type="InterPro" id="IPR027417">
    <property type="entry name" value="P-loop_NTPase"/>
</dbReference>
<dbReference type="InterPro" id="IPR005225">
    <property type="entry name" value="Small_GTP-bd"/>
</dbReference>
<dbReference type="InterPro" id="IPR027266">
    <property type="entry name" value="TrmE/GcvT_dom1"/>
</dbReference>
<dbReference type="NCBIfam" id="TIGR00450">
    <property type="entry name" value="mnmE_trmE_thdF"/>
    <property type="match status" value="1"/>
</dbReference>
<dbReference type="NCBIfam" id="NF003661">
    <property type="entry name" value="PRK05291.1-3"/>
    <property type="match status" value="1"/>
</dbReference>
<dbReference type="NCBIfam" id="TIGR00231">
    <property type="entry name" value="small_GTP"/>
    <property type="match status" value="1"/>
</dbReference>
<dbReference type="PANTHER" id="PTHR42714">
    <property type="entry name" value="TRNA MODIFICATION GTPASE GTPBP3"/>
    <property type="match status" value="1"/>
</dbReference>
<dbReference type="PANTHER" id="PTHR42714:SF2">
    <property type="entry name" value="TRNA MODIFICATION GTPASE GTPBP3, MITOCHONDRIAL"/>
    <property type="match status" value="1"/>
</dbReference>
<dbReference type="Pfam" id="PF01926">
    <property type="entry name" value="MMR_HSR1"/>
    <property type="match status" value="1"/>
</dbReference>
<dbReference type="Pfam" id="PF12631">
    <property type="entry name" value="MnmE_helical"/>
    <property type="match status" value="1"/>
</dbReference>
<dbReference type="Pfam" id="PF10396">
    <property type="entry name" value="TrmE_N"/>
    <property type="match status" value="1"/>
</dbReference>
<dbReference type="PRINTS" id="PR00449">
    <property type="entry name" value="RASTRNSFRMNG"/>
</dbReference>
<dbReference type="SUPFAM" id="SSF52540">
    <property type="entry name" value="P-loop containing nucleoside triphosphate hydrolases"/>
    <property type="match status" value="1"/>
</dbReference>
<dbReference type="PROSITE" id="PS51709">
    <property type="entry name" value="G_TRME"/>
    <property type="match status" value="1"/>
</dbReference>
<gene>
    <name evidence="1" type="primary">mnmE</name>
    <name evidence="1" type="synonym">trmE</name>
    <name type="ordered locus">Teth514_2409</name>
</gene>
<proteinExistence type="inferred from homology"/>